<keyword id="KW-0997">Cell inner membrane</keyword>
<keyword id="KW-1003">Cell membrane</keyword>
<keyword id="KW-0274">FAD</keyword>
<keyword id="KW-0285">Flavoprotein</keyword>
<keyword id="KW-0449">Lipoprotein</keyword>
<keyword id="KW-0460">Magnesium</keyword>
<keyword id="KW-0472">Membrane</keyword>
<keyword id="KW-0479">Metal-binding</keyword>
<keyword id="KW-0564">Palmitate</keyword>
<keyword id="KW-1185">Reference proteome</keyword>
<keyword id="KW-0732">Signal</keyword>
<keyword id="KW-0808">Transferase</keyword>
<organism>
    <name type="scientific">Chlamydia trachomatis serovar D (strain ATCC VR-885 / DSM 19411 / UW-3/Cx)</name>
    <dbReference type="NCBI Taxonomy" id="272561"/>
    <lineage>
        <taxon>Bacteria</taxon>
        <taxon>Pseudomonadati</taxon>
        <taxon>Chlamydiota</taxon>
        <taxon>Chlamydiia</taxon>
        <taxon>Chlamydiales</taxon>
        <taxon>Chlamydiaceae</taxon>
        <taxon>Chlamydia/Chlamydophila group</taxon>
        <taxon>Chlamydia</taxon>
    </lineage>
</organism>
<gene>
    <name type="primary">apbE</name>
    <name type="ordered locus">CT_077</name>
</gene>
<dbReference type="EC" id="2.7.1.180" evidence="1"/>
<dbReference type="EMBL" id="AE001273">
    <property type="protein sequence ID" value="AAC67668.1"/>
    <property type="molecule type" value="Genomic_DNA"/>
</dbReference>
<dbReference type="PIR" id="G71559">
    <property type="entry name" value="G71559"/>
</dbReference>
<dbReference type="RefSeq" id="NP_219580.1">
    <property type="nucleotide sequence ID" value="NC_000117.1"/>
</dbReference>
<dbReference type="RefSeq" id="WP_009871426.1">
    <property type="nucleotide sequence ID" value="NC_000117.1"/>
</dbReference>
<dbReference type="SMR" id="O84080"/>
<dbReference type="STRING" id="272561.CT_077"/>
<dbReference type="EnsemblBacteria" id="AAC67668">
    <property type="protein sequence ID" value="AAC67668"/>
    <property type="gene ID" value="CT_077"/>
</dbReference>
<dbReference type="GeneID" id="884131"/>
<dbReference type="KEGG" id="ctr:CT_077"/>
<dbReference type="PATRIC" id="fig|272561.5.peg.86"/>
<dbReference type="HOGENOM" id="CLU_044403_0_1_0"/>
<dbReference type="InParanoid" id="O84080"/>
<dbReference type="OrthoDB" id="9778595at2"/>
<dbReference type="Proteomes" id="UP000000431">
    <property type="component" value="Chromosome"/>
</dbReference>
<dbReference type="GO" id="GO:0005886">
    <property type="term" value="C:plasma membrane"/>
    <property type="evidence" value="ECO:0007669"/>
    <property type="project" value="UniProtKB-SubCell"/>
</dbReference>
<dbReference type="GO" id="GO:0046872">
    <property type="term" value="F:metal ion binding"/>
    <property type="evidence" value="ECO:0007669"/>
    <property type="project" value="UniProtKB-KW"/>
</dbReference>
<dbReference type="GO" id="GO:0016740">
    <property type="term" value="F:transferase activity"/>
    <property type="evidence" value="ECO:0000318"/>
    <property type="project" value="GO_Central"/>
</dbReference>
<dbReference type="Gene3D" id="3.10.520.10">
    <property type="entry name" value="ApbE-like domains"/>
    <property type="match status" value="1"/>
</dbReference>
<dbReference type="InterPro" id="IPR024932">
    <property type="entry name" value="ApbE"/>
</dbReference>
<dbReference type="InterPro" id="IPR003374">
    <property type="entry name" value="ApbE-like_sf"/>
</dbReference>
<dbReference type="PANTHER" id="PTHR30040:SF2">
    <property type="entry name" value="FAD:PROTEIN FMN TRANSFERASE"/>
    <property type="match status" value="1"/>
</dbReference>
<dbReference type="PANTHER" id="PTHR30040">
    <property type="entry name" value="THIAMINE BIOSYNTHESIS LIPOPROTEIN APBE"/>
    <property type="match status" value="1"/>
</dbReference>
<dbReference type="Pfam" id="PF02424">
    <property type="entry name" value="ApbE"/>
    <property type="match status" value="1"/>
</dbReference>
<dbReference type="PIRSF" id="PIRSF006268">
    <property type="entry name" value="ApbE"/>
    <property type="match status" value="1"/>
</dbReference>
<dbReference type="SUPFAM" id="SSF143631">
    <property type="entry name" value="ApbE-like"/>
    <property type="match status" value="1"/>
</dbReference>
<dbReference type="PROSITE" id="PS51257">
    <property type="entry name" value="PROKAR_LIPOPROTEIN"/>
    <property type="match status" value="1"/>
</dbReference>
<protein>
    <recommendedName>
        <fullName evidence="1">FAD:protein FMN transferase</fullName>
        <ecNumber evidence="1">2.7.1.180</ecNumber>
    </recommendedName>
    <alternativeName>
        <fullName evidence="1">Flavin transferase</fullName>
    </alternativeName>
</protein>
<accession>O84080</accession>
<feature type="signal peptide" evidence="4">
    <location>
        <begin position="1"/>
        <end position="19"/>
    </location>
</feature>
<feature type="chain" id="PRO_0000001747" description="FAD:protein FMN transferase">
    <location>
        <begin position="20"/>
        <end position="316"/>
    </location>
</feature>
<feature type="binding site" evidence="3">
    <location>
        <position position="33"/>
    </location>
    <ligand>
        <name>FAD</name>
        <dbReference type="ChEBI" id="CHEBI:57692"/>
    </ligand>
</feature>
<feature type="binding site" evidence="3">
    <location>
        <position position="71"/>
    </location>
    <ligand>
        <name>FAD</name>
        <dbReference type="ChEBI" id="CHEBI:57692"/>
    </ligand>
</feature>
<feature type="binding site" evidence="3">
    <location>
        <begin position="112"/>
        <end position="114"/>
    </location>
    <ligand>
        <name>FAD</name>
        <dbReference type="ChEBI" id="CHEBI:57692"/>
    </ligand>
</feature>
<feature type="binding site" evidence="3">
    <location>
        <position position="170"/>
    </location>
    <ligand>
        <name>FAD</name>
        <dbReference type="ChEBI" id="CHEBI:57692"/>
    </ligand>
</feature>
<feature type="binding site" evidence="2">
    <location>
        <position position="173"/>
    </location>
    <ligand>
        <name>Mg(2+)</name>
        <dbReference type="ChEBI" id="CHEBI:18420"/>
    </ligand>
</feature>
<feature type="binding site" evidence="2">
    <location>
        <position position="176"/>
    </location>
    <ligand>
        <name>FAD</name>
        <dbReference type="ChEBI" id="CHEBI:57692"/>
    </ligand>
</feature>
<feature type="binding site" evidence="3">
    <location>
        <position position="253"/>
    </location>
    <ligand>
        <name>FAD</name>
        <dbReference type="ChEBI" id="CHEBI:57692"/>
    </ligand>
</feature>
<feature type="binding site" evidence="2">
    <location>
        <position position="282"/>
    </location>
    <ligand>
        <name>Mg(2+)</name>
        <dbReference type="ChEBI" id="CHEBI:18420"/>
    </ligand>
</feature>
<feature type="binding site" evidence="2">
    <location>
        <position position="286"/>
    </location>
    <ligand>
        <name>Mg(2+)</name>
        <dbReference type="ChEBI" id="CHEBI:18420"/>
    </ligand>
</feature>
<feature type="lipid moiety-binding region" description="N-palmitoyl cysteine" evidence="4">
    <location>
        <position position="20"/>
    </location>
</feature>
<feature type="lipid moiety-binding region" description="S-diacylglycerol cysteine" evidence="4">
    <location>
        <position position="20"/>
    </location>
</feature>
<sequence length="316" mass="35343">MGKFFASYLLILAPFFLQSCSAPSRTTLEGVRMTIPYRIVFGEALSPDAFQQAQKEIDRVFDHIDQTFNNWNPLSEISRINRTTKQTPIPLSPALFAFLCEIDHFHAFSDGRFDPTLGALKSLWLLHLKSHTIPSQELQHLYKHSSGWHLISLDKTQQTLRKLSPLVQLDLCGTVKGFAVDLLGTACAQFCQNYYVEWGGEIKTKGKHPSGRSWAVASSATPEILHLHDHAIATSGSQYQRWHVDNKTYTHILDPLTGTPLEDSSHPILAVSVINESCAFADAMATALTTFSSKQEALDWANKKHLCAYITDKNVS</sequence>
<evidence type="ECO:0000250" key="1">
    <source>
        <dbReference type="UniProtKB" id="A5F5Y3"/>
    </source>
</evidence>
<evidence type="ECO:0000250" key="2">
    <source>
        <dbReference type="UniProtKB" id="O83774"/>
    </source>
</evidence>
<evidence type="ECO:0000250" key="3">
    <source>
        <dbReference type="UniProtKB" id="P41780"/>
    </source>
</evidence>
<evidence type="ECO:0000255" key="4">
    <source>
        <dbReference type="PROSITE-ProRule" id="PRU00303"/>
    </source>
</evidence>
<evidence type="ECO:0000305" key="5"/>
<reference key="1">
    <citation type="journal article" date="1998" name="Science">
        <title>Genome sequence of an obligate intracellular pathogen of humans: Chlamydia trachomatis.</title>
        <authorList>
            <person name="Stephens R.S."/>
            <person name="Kalman S."/>
            <person name="Lammel C.J."/>
            <person name="Fan J."/>
            <person name="Marathe R."/>
            <person name="Aravind L."/>
            <person name="Mitchell W.P."/>
            <person name="Olinger L."/>
            <person name="Tatusov R.L."/>
            <person name="Zhao Q."/>
            <person name="Koonin E.V."/>
            <person name="Davis R.W."/>
        </authorList>
    </citation>
    <scope>NUCLEOTIDE SEQUENCE [LARGE SCALE GENOMIC DNA]</scope>
    <source>
        <strain>ATCC VR-885 / DSM 19411 / UW-3/Cx</strain>
    </source>
</reference>
<comment type="function">
    <text evidence="1">Flavin transferase that catalyzes the transfer of the FMN moiety of FAD and its covalent binding to the hydroxyl group of a threonine residue in a target flavoprotein such as NqrB and NqrC, two subunits of the NQR complex.</text>
</comment>
<comment type="catalytic activity">
    <reaction evidence="1">
        <text>L-threonyl-[protein] + FAD = FMN-L-threonyl-[protein] + AMP + H(+)</text>
        <dbReference type="Rhea" id="RHEA:36847"/>
        <dbReference type="Rhea" id="RHEA-COMP:11060"/>
        <dbReference type="Rhea" id="RHEA-COMP:11061"/>
        <dbReference type="ChEBI" id="CHEBI:15378"/>
        <dbReference type="ChEBI" id="CHEBI:30013"/>
        <dbReference type="ChEBI" id="CHEBI:57692"/>
        <dbReference type="ChEBI" id="CHEBI:74257"/>
        <dbReference type="ChEBI" id="CHEBI:456215"/>
        <dbReference type="EC" id="2.7.1.180"/>
    </reaction>
</comment>
<comment type="cofactor">
    <cofactor evidence="1">
        <name>Mg(2+)</name>
        <dbReference type="ChEBI" id="CHEBI:18420"/>
    </cofactor>
</comment>
<comment type="subcellular location">
    <subcellularLocation>
        <location evidence="3 4">Cell inner membrane</location>
        <topology evidence="3 4">Lipid-anchor</topology>
        <orientation evidence="3">Periplasmic side</orientation>
    </subcellularLocation>
</comment>
<comment type="similarity">
    <text evidence="5">Belongs to the ApbE family.</text>
</comment>
<name>APBE_CHLTR</name>
<proteinExistence type="inferred from homology"/>